<gene>
    <name type="ordered locus">PH1631</name>
</gene>
<sequence>MEHWIVIYGGSESTKTLVCCNIYLNRIFSTSQYGNSADNVLYHTHYSSARPYYCYWNYSLFKFHYSCFKRGYSFGNIYKHWSAHGNLKGPCTYNSSLLKPRVLKHSAPPQVFWWGRRDLNPGLRRPRPGG</sequence>
<dbReference type="EMBL" id="BA000001">
    <property type="protein sequence ID" value="BAA30743.1"/>
    <property type="molecule type" value="Genomic_DNA"/>
</dbReference>
<dbReference type="PIR" id="G71042">
    <property type="entry name" value="G71042"/>
</dbReference>
<dbReference type="STRING" id="70601.gene:9378621"/>
<dbReference type="EnsemblBacteria" id="BAA30743">
    <property type="protein sequence ID" value="BAA30743"/>
    <property type="gene ID" value="BAA30743"/>
</dbReference>
<dbReference type="KEGG" id="pho:PH1631"/>
<dbReference type="Proteomes" id="UP000000752">
    <property type="component" value="Chromosome"/>
</dbReference>
<feature type="chain" id="PRO_0000184779" description="Putative uncharacterized protein PH1631">
    <location>
        <begin position="1"/>
        <end position="130"/>
    </location>
</feature>
<evidence type="ECO:0000305" key="1"/>
<proteinExistence type="uncertain"/>
<comment type="caution">
    <text evidence="1">Could be the product of a pseudogene. It is encoded in the reverse strand of the region coding for rpoK.</text>
</comment>
<protein>
    <recommendedName>
        <fullName>Putative uncharacterized protein PH1631</fullName>
    </recommendedName>
</protein>
<reference key="1">
    <citation type="journal article" date="1998" name="DNA Res.">
        <title>Complete sequence and gene organization of the genome of a hyper-thermophilic archaebacterium, Pyrococcus horikoshii OT3.</title>
        <authorList>
            <person name="Kawarabayasi Y."/>
            <person name="Sawada M."/>
            <person name="Horikawa H."/>
            <person name="Haikawa Y."/>
            <person name="Hino Y."/>
            <person name="Yamamoto S."/>
            <person name="Sekine M."/>
            <person name="Baba S."/>
            <person name="Kosugi H."/>
            <person name="Hosoyama A."/>
            <person name="Nagai Y."/>
            <person name="Sakai M."/>
            <person name="Ogura K."/>
            <person name="Otsuka R."/>
            <person name="Nakazawa H."/>
            <person name="Takamiya M."/>
            <person name="Ohfuku Y."/>
            <person name="Funahashi T."/>
            <person name="Tanaka T."/>
            <person name="Kudoh Y."/>
            <person name="Yamazaki J."/>
            <person name="Kushida N."/>
            <person name="Oguchi A."/>
            <person name="Aoki K."/>
            <person name="Yoshizawa T."/>
            <person name="Nakamura Y."/>
            <person name="Robb F.T."/>
            <person name="Horikoshi K."/>
            <person name="Masuchi Y."/>
            <person name="Shizuya H."/>
            <person name="Kikuchi H."/>
        </authorList>
    </citation>
    <scope>NUCLEOTIDE SEQUENCE [LARGE SCALE GENOMIC DNA]</scope>
    <source>
        <strain>ATCC 700860 / DSM 12428 / JCM 9974 / NBRC 100139 / OT-3</strain>
    </source>
</reference>
<organism>
    <name type="scientific">Pyrococcus horikoshii (strain ATCC 700860 / DSM 12428 / JCM 9974 / NBRC 100139 / OT-3)</name>
    <dbReference type="NCBI Taxonomy" id="70601"/>
    <lineage>
        <taxon>Archaea</taxon>
        <taxon>Methanobacteriati</taxon>
        <taxon>Methanobacteriota</taxon>
        <taxon>Thermococci</taxon>
        <taxon>Thermococcales</taxon>
        <taxon>Thermococcaceae</taxon>
        <taxon>Pyrococcus</taxon>
    </lineage>
</organism>
<accession>O59297</accession>
<name>Y1631_PYRHO</name>